<sequence>MADPAAVTKYPLLGLLQSYQQPTTPPHRIPKPAPWAPVKVCGGRRRLLSDQEQSQSTETPTTPTSCCEATPWTVSTVGLSVQLHAQTKQGLSVVLQLHL</sequence>
<gene>
    <name type="primary">E4</name>
</gene>
<feature type="chain" id="PRO_0000133269" description="Protein E4">
    <location>
        <begin position="1"/>
        <end position="99"/>
    </location>
</feature>
<feature type="region of interest" description="Disordered" evidence="2">
    <location>
        <begin position="48"/>
        <end position="67"/>
    </location>
</feature>
<feature type="compositionally biased region" description="Low complexity" evidence="2">
    <location>
        <begin position="51"/>
        <end position="67"/>
    </location>
</feature>
<name>VE4_HPV31</name>
<evidence type="ECO:0000250" key="1">
    <source>
        <dbReference type="UniProtKB" id="P06922"/>
    </source>
</evidence>
<evidence type="ECO:0000256" key="2">
    <source>
        <dbReference type="SAM" id="MobiDB-lite"/>
    </source>
</evidence>
<evidence type="ECO:0000305" key="3"/>
<reference key="1">
    <citation type="journal article" date="1989" name="Virology">
        <title>Nucleotide sequence of human papillomavirus type 31: a cervical neoplasia-associated virus.</title>
        <authorList>
            <person name="Goldsborough M.D."/>
            <person name="Disilvestre D."/>
            <person name="Temple G.F."/>
            <person name="Lorincz A.T."/>
        </authorList>
    </citation>
    <scope>NUCLEOTIDE SEQUENCE [GENOMIC DNA]</scope>
</reference>
<dbReference type="EMBL" id="J04353">
    <property type="protein sequence ID" value="AAA46949.1"/>
    <property type="status" value="ALT_SEQ"/>
    <property type="molecule type" value="Genomic_DNA"/>
</dbReference>
<dbReference type="PIR" id="E32444">
    <property type="entry name" value="W4WL31"/>
</dbReference>
<dbReference type="Proteomes" id="UP000009116">
    <property type="component" value="Genome"/>
</dbReference>
<dbReference type="GO" id="GO:0030430">
    <property type="term" value="C:host cell cytoplasm"/>
    <property type="evidence" value="ECO:0007669"/>
    <property type="project" value="UniProtKB-SubCell"/>
</dbReference>
<dbReference type="GO" id="GO:0042025">
    <property type="term" value="C:host cell nucleus"/>
    <property type="evidence" value="ECO:0007669"/>
    <property type="project" value="UniProtKB-SubCell"/>
</dbReference>
<dbReference type="GO" id="GO:0039592">
    <property type="term" value="P:symbiont-mediated arrest of host cell cycle during G2/M transition"/>
    <property type="evidence" value="ECO:0007669"/>
    <property type="project" value="UniProtKB-KW"/>
</dbReference>
<dbReference type="InterPro" id="IPR003861">
    <property type="entry name" value="Papilloma_E4"/>
</dbReference>
<dbReference type="Pfam" id="PF02711">
    <property type="entry name" value="Pap_E4"/>
    <property type="match status" value="1"/>
</dbReference>
<comment type="function">
    <text evidence="1">Contributes to multiple aspects of the viral life cycle including viral genome amplification, suppression of suprabasal cell differentiation and egress of newly formed virions. Induces host cell cycle arrest at the G2 phase by associating with and preventing the nuclear entry of host CDK1/cyclin B1 complexes. Inhibits cellular DNA replication by preventing loading of host replication licensing proteins MCM2 and MCM7 onto chromatin. Within the cytoplasm, associates with host kinase SRPK1, a splicing factor regulator, and inhibits its activity. Therefore, E4 favors expression of late viral transcripts by inhibiting SRPK1-mediated phosphorylation of host serine-arginine (SR) proteins that have critical roles in mRNA metabolism. Late in the infectious cycle, E4 also acts to diminish the integrity of the keratinocyte by disrupting the keratin cytoskeleton and inducing apoptosis through alteration of mitochondrial function to facilitate egress of the newly formed virions.</text>
</comment>
<comment type="subunit">
    <text evidence="1">Assembles into oligomeric complexes. Interacts with host CDK1. Interacts with host SRPK1; this interaction may favor expression of late viral transcripts. Interacts with host cytokeratin components KRT8 and KRT18.</text>
</comment>
<comment type="subcellular location">
    <subcellularLocation>
        <location evidence="1">Host cytoplasm</location>
    </subcellularLocation>
    <subcellularLocation>
        <location evidence="1">Host nucleus</location>
    </subcellularLocation>
</comment>
<comment type="PTM">
    <text evidence="1">Phosphorylated by host ERK. The phosphorylation triggers a structural change that enhances keratin binding and protein stability.</text>
</comment>
<comment type="miscellaneous">
    <text evidence="1">The major E4 form is first synthesized as an E1^E4 fusion protein from spliced E1^E4 transcripts, such that the first few amino acids of the E4 protein are derived from the N terminus of E1.</text>
</comment>
<comment type="similarity">
    <text evidence="3">Belongs to the papillomaviridae E4 protein family.</text>
</comment>
<keyword id="KW-0244">Early protein</keyword>
<keyword id="KW-1035">Host cytoplasm</keyword>
<keyword id="KW-1079">Host G2/M cell cycle arrest by virus</keyword>
<keyword id="KW-1048">Host nucleus</keyword>
<keyword id="KW-0945">Host-virus interaction</keyword>
<keyword id="KW-1121">Modulation of host cell cycle by virus</keyword>
<keyword id="KW-0597">Phosphoprotein</keyword>
<keyword id="KW-1185">Reference proteome</keyword>
<accession>P17384</accession>
<organismHost>
    <name type="scientific">Homo sapiens</name>
    <name type="common">Human</name>
    <dbReference type="NCBI Taxonomy" id="9606"/>
</organismHost>
<proteinExistence type="inferred from homology"/>
<organism>
    <name type="scientific">Human papillomavirus 31</name>
    <dbReference type="NCBI Taxonomy" id="10585"/>
    <lineage>
        <taxon>Viruses</taxon>
        <taxon>Monodnaviria</taxon>
        <taxon>Shotokuvirae</taxon>
        <taxon>Cossaviricota</taxon>
        <taxon>Papovaviricetes</taxon>
        <taxon>Zurhausenvirales</taxon>
        <taxon>Papillomaviridae</taxon>
        <taxon>Firstpapillomavirinae</taxon>
        <taxon>Alphapapillomavirus</taxon>
        <taxon>Alphapapillomavirus 9</taxon>
    </lineage>
</organism>
<protein>
    <recommendedName>
        <fullName>Protein E4</fullName>
    </recommendedName>
</protein>